<sequence length="694" mass="77367">MEAWGQSPACSSSRKARTGPSLASVLNDLPSAATLRYRGPGVLPWGTLDEDDDEGGRSLQAFAETAQMESHPSRELPWPMQARRAHRKSQATGQLASGSESRAAYWTRQLSRTKGKMKEGFQTIQPWAWTLKKIGGQFGAGTESYFSLLRFLLFLNLVASVIEICMKLIPTWLEGAPPGPPGPNISSPCGSYIPHTHGLVAFPTQLFNLLSGEGYLEWSPLFYGFYPPRSNLAITYLCSVFAISVIYLLCILRRSVSGLKETLLAESDILTSYSHRVFSAWNFGLCGDVHVRLRQRIILYELQVDLEEAVVRRRAAEQTLSQRAKVWSMRALLNVLVLALLGAAFYGIYWATEYTLTLQETPLVRQTPLFKLLVDYLPSIFISLFNFVLPPVFKFIASLEGYTQSRQIVLILLRTVFLRLASLVFLLVSLWSQITCGGNMEAEGCKACGYNYKEIPCWETRLGQEMYKLVLFDLLMGLLVTLLVQFPRKILCGLCPGALGRLSGTLEFQVPDEVLGLIYAQTVVWVGSFFCPLLPLINTAKFLILFCLKKITLFSIYSPASRTFRASTANFFFPLVLLVGLAISAVPVLYSIFLIPPSKLCGPFRGKLSIWAQIPEAIESLPQTAQNFLYFLGTQAFTVPLLILSSILMMYTVALANCYGRLISELKRQIETEVQNKVFLAQRAVALSSRNGTS</sequence>
<protein>
    <recommendedName>
        <fullName>Voltage-gated chloride channel TMC4</fullName>
    </recommendedName>
    <alternativeName>
        <fullName evidence="8">Transmembrane channel-like protein 4</fullName>
    </alternativeName>
</protein>
<accession>Q7TQ65</accession>
<accession>Q7TMJ5</accession>
<accession>Q7TN62</accession>
<accession>Q8C7J5</accession>
<accession>Q8CGE2</accession>
<accession>Q8R1X9</accession>
<name>TMC4_MOUSE</name>
<gene>
    <name evidence="10" type="primary">Tmc4</name>
</gene>
<keyword id="KW-0025">Alternative splicing</keyword>
<keyword id="KW-0325">Glycoprotein</keyword>
<keyword id="KW-0407">Ion channel</keyword>
<keyword id="KW-0406">Ion transport</keyword>
<keyword id="KW-0472">Membrane</keyword>
<keyword id="KW-1185">Reference proteome</keyword>
<keyword id="KW-0812">Transmembrane</keyword>
<keyword id="KW-1133">Transmembrane helix</keyword>
<keyword id="KW-0813">Transport</keyword>
<reference key="1">
    <citation type="journal article" date="2003" name="BMC Genomics">
        <title>TMC and EVER genes belong to a larger novel family, the TMC gene family encoding transmembrane proteins.</title>
        <authorList>
            <person name="Keresztes G."/>
            <person name="Mutai H."/>
            <person name="Heller S."/>
        </authorList>
    </citation>
    <scope>NUCLEOTIDE SEQUENCE [MRNA] (ISOFORM 1)</scope>
    <scope>TISSUE SPECIFICITY</scope>
    <source>
        <strain>C57BL/6J</strain>
    </source>
</reference>
<reference key="2">
    <citation type="journal article" date="2003" name="Genomics">
        <title>Characterization of the transmembrane channel-like (TMC) gene family: functional clues from hearing loss and epidermodysplasia verruciformis.</title>
        <authorList>
            <person name="Kurima K."/>
            <person name="Yang Y."/>
            <person name="Sorber K."/>
            <person name="Griffith A.J."/>
        </authorList>
    </citation>
    <scope>NUCLEOTIDE SEQUENCE [MRNA] (ISOFORM 1)</scope>
</reference>
<reference key="3">
    <citation type="journal article" date="2005" name="Science">
        <title>The transcriptional landscape of the mammalian genome.</title>
        <authorList>
            <person name="Carninci P."/>
            <person name="Kasukawa T."/>
            <person name="Katayama S."/>
            <person name="Gough J."/>
            <person name="Frith M.C."/>
            <person name="Maeda N."/>
            <person name="Oyama R."/>
            <person name="Ravasi T."/>
            <person name="Lenhard B."/>
            <person name="Wells C."/>
            <person name="Kodzius R."/>
            <person name="Shimokawa K."/>
            <person name="Bajic V.B."/>
            <person name="Brenner S.E."/>
            <person name="Batalov S."/>
            <person name="Forrest A.R."/>
            <person name="Zavolan M."/>
            <person name="Davis M.J."/>
            <person name="Wilming L.G."/>
            <person name="Aidinis V."/>
            <person name="Allen J.E."/>
            <person name="Ambesi-Impiombato A."/>
            <person name="Apweiler R."/>
            <person name="Aturaliya R.N."/>
            <person name="Bailey T.L."/>
            <person name="Bansal M."/>
            <person name="Baxter L."/>
            <person name="Beisel K.W."/>
            <person name="Bersano T."/>
            <person name="Bono H."/>
            <person name="Chalk A.M."/>
            <person name="Chiu K.P."/>
            <person name="Choudhary V."/>
            <person name="Christoffels A."/>
            <person name="Clutterbuck D.R."/>
            <person name="Crowe M.L."/>
            <person name="Dalla E."/>
            <person name="Dalrymple B.P."/>
            <person name="de Bono B."/>
            <person name="Della Gatta G."/>
            <person name="di Bernardo D."/>
            <person name="Down T."/>
            <person name="Engstrom P."/>
            <person name="Fagiolini M."/>
            <person name="Faulkner G."/>
            <person name="Fletcher C.F."/>
            <person name="Fukushima T."/>
            <person name="Furuno M."/>
            <person name="Futaki S."/>
            <person name="Gariboldi M."/>
            <person name="Georgii-Hemming P."/>
            <person name="Gingeras T.R."/>
            <person name="Gojobori T."/>
            <person name="Green R.E."/>
            <person name="Gustincich S."/>
            <person name="Harbers M."/>
            <person name="Hayashi Y."/>
            <person name="Hensch T.K."/>
            <person name="Hirokawa N."/>
            <person name="Hill D."/>
            <person name="Huminiecki L."/>
            <person name="Iacono M."/>
            <person name="Ikeo K."/>
            <person name="Iwama A."/>
            <person name="Ishikawa T."/>
            <person name="Jakt M."/>
            <person name="Kanapin A."/>
            <person name="Katoh M."/>
            <person name="Kawasawa Y."/>
            <person name="Kelso J."/>
            <person name="Kitamura H."/>
            <person name="Kitano H."/>
            <person name="Kollias G."/>
            <person name="Krishnan S.P."/>
            <person name="Kruger A."/>
            <person name="Kummerfeld S.K."/>
            <person name="Kurochkin I.V."/>
            <person name="Lareau L.F."/>
            <person name="Lazarevic D."/>
            <person name="Lipovich L."/>
            <person name="Liu J."/>
            <person name="Liuni S."/>
            <person name="McWilliam S."/>
            <person name="Madan Babu M."/>
            <person name="Madera M."/>
            <person name="Marchionni L."/>
            <person name="Matsuda H."/>
            <person name="Matsuzawa S."/>
            <person name="Miki H."/>
            <person name="Mignone F."/>
            <person name="Miyake S."/>
            <person name="Morris K."/>
            <person name="Mottagui-Tabar S."/>
            <person name="Mulder N."/>
            <person name="Nakano N."/>
            <person name="Nakauchi H."/>
            <person name="Ng P."/>
            <person name="Nilsson R."/>
            <person name="Nishiguchi S."/>
            <person name="Nishikawa S."/>
            <person name="Nori F."/>
            <person name="Ohara O."/>
            <person name="Okazaki Y."/>
            <person name="Orlando V."/>
            <person name="Pang K.C."/>
            <person name="Pavan W.J."/>
            <person name="Pavesi G."/>
            <person name="Pesole G."/>
            <person name="Petrovsky N."/>
            <person name="Piazza S."/>
            <person name="Reed J."/>
            <person name="Reid J.F."/>
            <person name="Ring B.Z."/>
            <person name="Ringwald M."/>
            <person name="Rost B."/>
            <person name="Ruan Y."/>
            <person name="Salzberg S.L."/>
            <person name="Sandelin A."/>
            <person name="Schneider C."/>
            <person name="Schoenbach C."/>
            <person name="Sekiguchi K."/>
            <person name="Semple C.A."/>
            <person name="Seno S."/>
            <person name="Sessa L."/>
            <person name="Sheng Y."/>
            <person name="Shibata Y."/>
            <person name="Shimada H."/>
            <person name="Shimada K."/>
            <person name="Silva D."/>
            <person name="Sinclair B."/>
            <person name="Sperling S."/>
            <person name="Stupka E."/>
            <person name="Sugiura K."/>
            <person name="Sultana R."/>
            <person name="Takenaka Y."/>
            <person name="Taki K."/>
            <person name="Tammoja K."/>
            <person name="Tan S.L."/>
            <person name="Tang S."/>
            <person name="Taylor M.S."/>
            <person name="Tegner J."/>
            <person name="Teichmann S.A."/>
            <person name="Ueda H.R."/>
            <person name="van Nimwegen E."/>
            <person name="Verardo R."/>
            <person name="Wei C.L."/>
            <person name="Yagi K."/>
            <person name="Yamanishi H."/>
            <person name="Zabarovsky E."/>
            <person name="Zhu S."/>
            <person name="Zimmer A."/>
            <person name="Hide W."/>
            <person name="Bult C."/>
            <person name="Grimmond S.M."/>
            <person name="Teasdale R.D."/>
            <person name="Liu E.T."/>
            <person name="Brusic V."/>
            <person name="Quackenbush J."/>
            <person name="Wahlestedt C."/>
            <person name="Mattick J.S."/>
            <person name="Hume D.A."/>
            <person name="Kai C."/>
            <person name="Sasaki D."/>
            <person name="Tomaru Y."/>
            <person name="Fukuda S."/>
            <person name="Kanamori-Katayama M."/>
            <person name="Suzuki M."/>
            <person name="Aoki J."/>
            <person name="Arakawa T."/>
            <person name="Iida J."/>
            <person name="Imamura K."/>
            <person name="Itoh M."/>
            <person name="Kato T."/>
            <person name="Kawaji H."/>
            <person name="Kawagashira N."/>
            <person name="Kawashima T."/>
            <person name="Kojima M."/>
            <person name="Kondo S."/>
            <person name="Konno H."/>
            <person name="Nakano K."/>
            <person name="Ninomiya N."/>
            <person name="Nishio T."/>
            <person name="Okada M."/>
            <person name="Plessy C."/>
            <person name="Shibata K."/>
            <person name="Shiraki T."/>
            <person name="Suzuki S."/>
            <person name="Tagami M."/>
            <person name="Waki K."/>
            <person name="Watahiki A."/>
            <person name="Okamura-Oho Y."/>
            <person name="Suzuki H."/>
            <person name="Kawai J."/>
            <person name="Hayashizaki Y."/>
        </authorList>
    </citation>
    <scope>NUCLEOTIDE SEQUENCE [LARGE SCALE MRNA] (ISOFORM 3)</scope>
    <source>
        <strain>C57BL/6J</strain>
        <tissue>Liver</tissue>
    </source>
</reference>
<reference key="4">
    <citation type="journal article" date="2004" name="Genome Res.">
        <title>The status, quality, and expansion of the NIH full-length cDNA project: the Mammalian Gene Collection (MGC).</title>
        <authorList>
            <consortium name="The MGC Project Team"/>
        </authorList>
    </citation>
    <scope>NUCLEOTIDE SEQUENCE [LARGE SCALE MRNA] OF 6-694 (ISOFORM 1)</scope>
    <scope>NUCLEOTIDE SEQUENCE [LARGE SCALE MRNA] OF 67-694 (ISOFORM 2)</scope>
    <source>
        <strain>FVB/N</strain>
        <tissue>Mammary tumor</tissue>
        <tissue>Salivary gland</tissue>
    </source>
</reference>
<reference key="5">
    <citation type="journal article" date="2021" name="J. Physiol. Sci.">
        <title>TMC4 is a novel chloride channel involved in high-concentration salt taste sensation.</title>
        <authorList>
            <person name="Kasahara Y."/>
            <person name="Narukawa M."/>
            <person name="Ishimaru Y."/>
            <person name="Kanda S."/>
            <person name="Umatani C."/>
            <person name="Takayama Y."/>
            <person name="Tominaga M."/>
            <person name="Oka Y."/>
            <person name="Kondo K."/>
            <person name="Kondo T."/>
            <person name="Takeuchi A."/>
            <person name="Misaka T."/>
            <person name="Abe K."/>
            <person name="Asakura T."/>
        </authorList>
    </citation>
    <scope>FUNCTION</scope>
    <scope>TRANSPORTER ACTIVITY</scope>
    <scope>TISSUE SPECIFICITY</scope>
    <scope>DISRUPTION PHENOTYPE</scope>
</reference>
<evidence type="ECO:0000250" key="1">
    <source>
        <dbReference type="UniProtKB" id="Q7Z404"/>
    </source>
</evidence>
<evidence type="ECO:0000255" key="2"/>
<evidence type="ECO:0000256" key="3">
    <source>
        <dbReference type="SAM" id="MobiDB-lite"/>
    </source>
</evidence>
<evidence type="ECO:0000269" key="4">
    <source>
    </source>
</evidence>
<evidence type="ECO:0000269" key="5">
    <source>
    </source>
</evidence>
<evidence type="ECO:0000303" key="6">
    <source>
    </source>
</evidence>
<evidence type="ECO:0000303" key="7">
    <source>
    </source>
</evidence>
<evidence type="ECO:0000303" key="8">
    <source>
    </source>
</evidence>
<evidence type="ECO:0000305" key="9"/>
<evidence type="ECO:0000312" key="10">
    <source>
        <dbReference type="MGI" id="MGI:2669035"/>
    </source>
</evidence>
<proteinExistence type="evidence at transcript level"/>
<organism>
    <name type="scientific">Mus musculus</name>
    <name type="common">Mouse</name>
    <dbReference type="NCBI Taxonomy" id="10090"/>
    <lineage>
        <taxon>Eukaryota</taxon>
        <taxon>Metazoa</taxon>
        <taxon>Chordata</taxon>
        <taxon>Craniata</taxon>
        <taxon>Vertebrata</taxon>
        <taxon>Euteleostomi</taxon>
        <taxon>Mammalia</taxon>
        <taxon>Eutheria</taxon>
        <taxon>Euarchontoglires</taxon>
        <taxon>Glires</taxon>
        <taxon>Rodentia</taxon>
        <taxon>Myomorpha</taxon>
        <taxon>Muroidea</taxon>
        <taxon>Muridae</taxon>
        <taxon>Murinae</taxon>
        <taxon>Mus</taxon>
        <taxon>Mus</taxon>
    </lineage>
</organism>
<comment type="function">
    <text evidence="1 5">Voltage-gated chloride channel involved in high-concentration salt taste sensation (PubMed:34429071). Depolarization induced by high NaCl concentration may trigger the activation of TMC4-mediated chloride influx into taste bud cells, helping the return to resting potential (PubMed:34429071). Also allows permeation of organic anions including gluconate, but their current amplitudes at positive potentials are less than that of chloride (PubMed:34429071). Involved in pH and temperature-dependent modulation of salty taste (By similarity).</text>
</comment>
<comment type="catalytic activity">
    <reaction evidence="5">
        <text>chloride(in) = chloride(out)</text>
        <dbReference type="Rhea" id="RHEA:29823"/>
        <dbReference type="ChEBI" id="CHEBI:17996"/>
    </reaction>
</comment>
<comment type="subcellular location">
    <subcellularLocation>
        <location evidence="9">Membrane</location>
        <topology evidence="9">Multi-pass membrane protein</topology>
    </subcellularLocation>
</comment>
<comment type="alternative products">
    <event type="alternative splicing"/>
    <isoform>
        <id>Q7TQ65-1</id>
        <name>1</name>
        <sequence type="displayed"/>
    </isoform>
    <isoform>
        <id>Q7TQ65-2</id>
        <name>2</name>
        <sequence type="described" ref="VSP_026015 VSP_026016"/>
    </isoform>
    <isoform>
        <id>Q7TQ65-3</id>
        <name>3</name>
        <sequence type="described" ref="VSP_026014"/>
    </isoform>
</comment>
<comment type="tissue specificity">
    <text evidence="4 5">Expressed in taste bud cells of the posterior tongue (PubMed:34429071). Ubiquitously expressed (PubMed:12812529).</text>
</comment>
<comment type="disruption phenotype">
    <text evidence="5">Knockout mice show impaired glossopharyngeal nerve response to high NaCl and KCl (PubMed:34429071). Slight increased lick ratio value of KO mice for NaCl solutions compared to wild-type mice (PubMed:34429071). No significant difference in Na, K, Cl, Ca, and Mg content in the sera and urine compared to wild-type (PubMed:34429071). No apparent difference in morphology of taste cells and the expression of representative taste-related proteins compared to wild-type (PubMed:34429071).</text>
</comment>
<comment type="similarity">
    <text evidence="9">Belongs to the TMC family.</text>
</comment>
<feature type="chain" id="PRO_0000289469" description="Voltage-gated chloride channel TMC4">
    <location>
        <begin position="1"/>
        <end position="694"/>
    </location>
</feature>
<feature type="topological domain" description="Extracellular" evidence="2">
    <location>
        <begin position="1"/>
        <end position="150"/>
    </location>
</feature>
<feature type="transmembrane region" description="Helical" evidence="2">
    <location>
        <begin position="151"/>
        <end position="171"/>
    </location>
</feature>
<feature type="topological domain" description="Cytoplasmic" evidence="2">
    <location>
        <begin position="172"/>
        <end position="231"/>
    </location>
</feature>
<feature type="transmembrane region" description="Helical" evidence="2">
    <location>
        <begin position="232"/>
        <end position="252"/>
    </location>
</feature>
<feature type="topological domain" description="Extracellular" evidence="2">
    <location>
        <begin position="253"/>
        <end position="330"/>
    </location>
</feature>
<feature type="transmembrane region" description="Helical" evidence="2">
    <location>
        <begin position="331"/>
        <end position="351"/>
    </location>
</feature>
<feature type="topological domain" description="Cytoplasmic" evidence="2">
    <location>
        <begin position="352"/>
        <end position="376"/>
    </location>
</feature>
<feature type="transmembrane region" description="Helical" evidence="2">
    <location>
        <begin position="377"/>
        <end position="397"/>
    </location>
</feature>
<feature type="topological domain" description="Extracellular" evidence="2">
    <location>
        <begin position="398"/>
        <end position="407"/>
    </location>
</feature>
<feature type="transmembrane region" description="Helical" evidence="2">
    <location>
        <begin position="408"/>
        <end position="428"/>
    </location>
</feature>
<feature type="topological domain" description="Cytoplasmic" evidence="2">
    <location>
        <begin position="429"/>
        <end position="465"/>
    </location>
</feature>
<feature type="transmembrane region" description="Helical" evidence="2">
    <location>
        <begin position="466"/>
        <end position="486"/>
    </location>
</feature>
<feature type="topological domain" description="Extracellular" evidence="2">
    <location>
        <begin position="487"/>
        <end position="513"/>
    </location>
</feature>
<feature type="transmembrane region" description="Helical" evidence="2">
    <location>
        <begin position="514"/>
        <end position="534"/>
    </location>
</feature>
<feature type="topological domain" description="Cytoplasmic" evidence="2">
    <location>
        <position position="535"/>
    </location>
</feature>
<feature type="transmembrane region" description="Helical" evidence="2">
    <location>
        <begin position="536"/>
        <end position="556"/>
    </location>
</feature>
<feature type="topological domain" description="Extracellular" evidence="2">
    <location>
        <begin position="557"/>
        <end position="574"/>
    </location>
</feature>
<feature type="transmembrane region" description="Helical" evidence="2">
    <location>
        <begin position="575"/>
        <end position="595"/>
    </location>
</feature>
<feature type="topological domain" description="Cytoplasmic" evidence="2">
    <location>
        <begin position="596"/>
        <end position="635"/>
    </location>
</feature>
<feature type="transmembrane region" description="Helical" evidence="2">
    <location>
        <begin position="636"/>
        <end position="656"/>
    </location>
</feature>
<feature type="topological domain" description="Extracellular" evidence="2">
    <location>
        <begin position="657"/>
        <end position="694"/>
    </location>
</feature>
<feature type="region of interest" description="Disordered" evidence="3">
    <location>
        <begin position="1"/>
        <end position="21"/>
    </location>
</feature>
<feature type="glycosylation site" description="N-linked (GlcNAc...) asparagine" evidence="2">
    <location>
        <position position="691"/>
    </location>
</feature>
<feature type="splice variant" id="VSP_026014" description="In isoform 3." evidence="7">
    <location>
        <begin position="1"/>
        <end position="67"/>
    </location>
</feature>
<feature type="splice variant" id="VSP_026015" description="In isoform 2." evidence="6">
    <original>TVFLRLASLVFLLVSLWSQITCGGNMEAEGCKACGYN</original>
    <variation>FWTHGMGRECRQKGERDRWKKVLQIRQRRAGRGGARL</variation>
    <location>
        <begin position="415"/>
        <end position="451"/>
    </location>
</feature>
<feature type="splice variant" id="VSP_026016" description="In isoform 2." evidence="6">
    <location>
        <begin position="452"/>
        <end position="694"/>
    </location>
</feature>
<feature type="sequence conflict" description="In Ref. 1; AAP78777." evidence="9" ref="1">
    <original>R</original>
    <variation>T</variation>
    <location>
        <position position="102"/>
    </location>
</feature>
<feature type="sequence conflict" description="In Ref. 1; AAP78777." evidence="9" ref="1">
    <original>S</original>
    <variation>A</variation>
    <location>
        <position position="111"/>
    </location>
</feature>
<feature type="sequence conflict" description="In Ref. 1; AAP78777." evidence="9" ref="1">
    <original>P</original>
    <variation>A</variation>
    <location>
        <position position="228"/>
    </location>
</feature>
<feature type="sequence conflict" description="In Ref. 3; BAC34068." evidence="9" ref="3">
    <original>V</original>
    <variation>I</variation>
    <location>
        <position position="245"/>
    </location>
</feature>
<feature type="sequence conflict" description="In Ref. 2; AAP69871." evidence="9" ref="2">
    <original>Y</original>
    <variation>H</variation>
    <location>
        <position position="349"/>
    </location>
</feature>
<feature type="sequence conflict" description="In Ref. 2; AAP69871." evidence="9" ref="2">
    <original>S</original>
    <variation>A</variation>
    <location>
        <position position="383"/>
    </location>
</feature>
<feature type="sequence conflict" description="In Ref. 2; AAP69871." evidence="9" ref="2">
    <original>F</original>
    <variation>S</variation>
    <location>
        <position position="393"/>
    </location>
</feature>
<feature type="sequence conflict" description="In Ref. 2; AAP69871." evidence="9" ref="2">
    <original>E</original>
    <variation>G</variation>
    <location>
        <position position="441"/>
    </location>
</feature>
<feature type="sequence conflict" description="In Ref. 3; BAC34068." evidence="9" ref="3">
    <original>Q</original>
    <variation>H</variation>
    <location>
        <position position="682"/>
    </location>
</feature>
<dbReference type="EMBL" id="AY263162">
    <property type="protein sequence ID" value="AAP78777.1"/>
    <property type="molecule type" value="mRNA"/>
</dbReference>
<dbReference type="EMBL" id="AY236493">
    <property type="protein sequence ID" value="AAP69871.1"/>
    <property type="molecule type" value="mRNA"/>
</dbReference>
<dbReference type="EMBL" id="AK050105">
    <property type="protein sequence ID" value="BAC34068.1"/>
    <property type="molecule type" value="mRNA"/>
</dbReference>
<dbReference type="EMBL" id="BC022758">
    <property type="protein sequence ID" value="AAH22758.1"/>
    <property type="molecule type" value="mRNA"/>
</dbReference>
<dbReference type="EMBL" id="BC040466">
    <property type="protein sequence ID" value="AAH40466.1"/>
    <property type="molecule type" value="mRNA"/>
</dbReference>
<dbReference type="EMBL" id="BC055939">
    <property type="protein sequence ID" value="AAH55939.1"/>
    <property type="molecule type" value="mRNA"/>
</dbReference>
<dbReference type="CCDS" id="CCDS20723.1">
    <molecule id="Q7TQ65-1"/>
</dbReference>
<dbReference type="RefSeq" id="NP_861541.2">
    <property type="nucleotide sequence ID" value="NM_181820.2"/>
</dbReference>
<dbReference type="SMR" id="Q7TQ65"/>
<dbReference type="FunCoup" id="Q7TQ65">
    <property type="interactions" value="8"/>
</dbReference>
<dbReference type="STRING" id="10090.ENSMUSP00000043853"/>
<dbReference type="GlyCosmos" id="Q7TQ65">
    <property type="glycosylation" value="1 site, No reported glycans"/>
</dbReference>
<dbReference type="GlyGen" id="Q7TQ65">
    <property type="glycosylation" value="1 site"/>
</dbReference>
<dbReference type="PhosphoSitePlus" id="Q7TQ65"/>
<dbReference type="PaxDb" id="10090-ENSMUSP00000043853"/>
<dbReference type="ProteomicsDB" id="259235">
    <molecule id="Q7TQ65-1"/>
</dbReference>
<dbReference type="ProteomicsDB" id="259236">
    <molecule id="Q7TQ65-2"/>
</dbReference>
<dbReference type="ProteomicsDB" id="259237">
    <molecule id="Q7TQ65-3"/>
</dbReference>
<dbReference type="DNASU" id="353499"/>
<dbReference type="GeneID" id="353499"/>
<dbReference type="KEGG" id="mmu:353499"/>
<dbReference type="UCSC" id="uc009evp.1">
    <molecule id="Q7TQ65-2"/>
    <property type="organism name" value="mouse"/>
</dbReference>
<dbReference type="AGR" id="MGI:2669035"/>
<dbReference type="CTD" id="147798"/>
<dbReference type="MGI" id="MGI:2669035">
    <property type="gene designation" value="Tmc4"/>
</dbReference>
<dbReference type="eggNOG" id="ENOG502S3W0">
    <property type="taxonomic scope" value="Eukaryota"/>
</dbReference>
<dbReference type="InParanoid" id="Q7TQ65"/>
<dbReference type="OrthoDB" id="1936208at2759"/>
<dbReference type="PhylomeDB" id="Q7TQ65"/>
<dbReference type="BioGRID-ORCS" id="353499">
    <property type="hits" value="3 hits in 76 CRISPR screens"/>
</dbReference>
<dbReference type="ChiTaRS" id="Tmc4">
    <property type="organism name" value="mouse"/>
</dbReference>
<dbReference type="PRO" id="PR:Q7TQ65"/>
<dbReference type="Proteomes" id="UP000000589">
    <property type="component" value="Unplaced"/>
</dbReference>
<dbReference type="RNAct" id="Q7TQ65">
    <property type="molecule type" value="protein"/>
</dbReference>
<dbReference type="GO" id="GO:0005886">
    <property type="term" value="C:plasma membrane"/>
    <property type="evidence" value="ECO:0007669"/>
    <property type="project" value="InterPro"/>
</dbReference>
<dbReference type="GO" id="GO:0005247">
    <property type="term" value="F:voltage-gated chloride channel activity"/>
    <property type="evidence" value="ECO:0000315"/>
    <property type="project" value="UniProtKB"/>
</dbReference>
<dbReference type="GO" id="GO:0050914">
    <property type="term" value="P:sensory perception of salty taste"/>
    <property type="evidence" value="ECO:0000315"/>
    <property type="project" value="UniProtKB"/>
</dbReference>
<dbReference type="InterPro" id="IPR038900">
    <property type="entry name" value="TMC"/>
</dbReference>
<dbReference type="InterPro" id="IPR012496">
    <property type="entry name" value="TMC_dom"/>
</dbReference>
<dbReference type="PANTHER" id="PTHR23302:SF45">
    <property type="entry name" value="TRANSMEMBRANE CHANNEL-LIKE PROTEIN 4"/>
    <property type="match status" value="1"/>
</dbReference>
<dbReference type="PANTHER" id="PTHR23302">
    <property type="entry name" value="TRANSMEMBRANE CHANNEL-RELATED"/>
    <property type="match status" value="1"/>
</dbReference>
<dbReference type="Pfam" id="PF07810">
    <property type="entry name" value="TMC"/>
    <property type="match status" value="1"/>
</dbReference>